<proteinExistence type="inferred from homology"/>
<sequence length="456" mass="49537">MSSQIKQVFARQILDSRGNPTIEVEVVLESGAFGRAAVPSGASTGIREALELRDGNKALFLGKSVYKAVENVNTKIAQAVKGLDALDQRLIDKTMIELDGSENKKNLGANAILGVSLATARAAASHLRKPFYRYLMDVKEYLMPVPMMNVINGGSHADNNVDMQEFMIVPAGFDTFSEALRCGTEVFHILKKVLIADGYSVAGVGDEGGYAPDLPSNEAAIEAILKAVKEAGYEPGKHVFIALDPASSEFYKDGKYELKSENKSLTSEEMIDYYAAWVEKYPIVSIEDGLAEEDWAGWKLLTEKLGNKVQLVGDDLFVTNPSILAKGIEKGIANSILIKLNQIGTLTETFEAMAMAGQAGYTCVVSHRSGETSDTIIADLAVATCSGQIKTGSLSRSDRIAKYNQLLRIEEELGENAIYPGIKAFVFNSDEEVEEVVQEIIVEDSEAEKVVVQVEE</sequence>
<organism>
    <name type="scientific">Francisella tularensis subsp. tularensis (strain FSC 198)</name>
    <dbReference type="NCBI Taxonomy" id="393115"/>
    <lineage>
        <taxon>Bacteria</taxon>
        <taxon>Pseudomonadati</taxon>
        <taxon>Pseudomonadota</taxon>
        <taxon>Gammaproteobacteria</taxon>
        <taxon>Thiotrichales</taxon>
        <taxon>Francisellaceae</taxon>
        <taxon>Francisella</taxon>
    </lineage>
</organism>
<dbReference type="EC" id="4.2.1.11" evidence="1"/>
<dbReference type="EMBL" id="AM286280">
    <property type="protein sequence ID" value="CAL08725.1"/>
    <property type="molecule type" value="Genomic_DNA"/>
</dbReference>
<dbReference type="RefSeq" id="WP_003020514.1">
    <property type="nucleotide sequence ID" value="NC_008245.1"/>
</dbReference>
<dbReference type="SMR" id="Q14IC0"/>
<dbReference type="KEGG" id="ftf:FTF0709"/>
<dbReference type="HOGENOM" id="CLU_031223_2_1_6"/>
<dbReference type="UniPathway" id="UPA00109">
    <property type="reaction ID" value="UER00187"/>
</dbReference>
<dbReference type="GO" id="GO:0009986">
    <property type="term" value="C:cell surface"/>
    <property type="evidence" value="ECO:0007669"/>
    <property type="project" value="UniProtKB-SubCell"/>
</dbReference>
<dbReference type="GO" id="GO:0005576">
    <property type="term" value="C:extracellular region"/>
    <property type="evidence" value="ECO:0007669"/>
    <property type="project" value="UniProtKB-SubCell"/>
</dbReference>
<dbReference type="GO" id="GO:0000015">
    <property type="term" value="C:phosphopyruvate hydratase complex"/>
    <property type="evidence" value="ECO:0007669"/>
    <property type="project" value="InterPro"/>
</dbReference>
<dbReference type="GO" id="GO:0000287">
    <property type="term" value="F:magnesium ion binding"/>
    <property type="evidence" value="ECO:0007669"/>
    <property type="project" value="UniProtKB-UniRule"/>
</dbReference>
<dbReference type="GO" id="GO:0004634">
    <property type="term" value="F:phosphopyruvate hydratase activity"/>
    <property type="evidence" value="ECO:0007669"/>
    <property type="project" value="UniProtKB-UniRule"/>
</dbReference>
<dbReference type="GO" id="GO:0006096">
    <property type="term" value="P:glycolytic process"/>
    <property type="evidence" value="ECO:0007669"/>
    <property type="project" value="UniProtKB-UniRule"/>
</dbReference>
<dbReference type="CDD" id="cd03313">
    <property type="entry name" value="enolase"/>
    <property type="match status" value="1"/>
</dbReference>
<dbReference type="FunFam" id="3.20.20.120:FF:000001">
    <property type="entry name" value="Enolase"/>
    <property type="match status" value="1"/>
</dbReference>
<dbReference type="FunFam" id="3.30.390.10:FF:000001">
    <property type="entry name" value="Enolase"/>
    <property type="match status" value="1"/>
</dbReference>
<dbReference type="Gene3D" id="3.20.20.120">
    <property type="entry name" value="Enolase-like C-terminal domain"/>
    <property type="match status" value="1"/>
</dbReference>
<dbReference type="Gene3D" id="3.30.390.10">
    <property type="entry name" value="Enolase-like, N-terminal domain"/>
    <property type="match status" value="1"/>
</dbReference>
<dbReference type="HAMAP" id="MF_00318">
    <property type="entry name" value="Enolase"/>
    <property type="match status" value="1"/>
</dbReference>
<dbReference type="InterPro" id="IPR000941">
    <property type="entry name" value="Enolase"/>
</dbReference>
<dbReference type="InterPro" id="IPR036849">
    <property type="entry name" value="Enolase-like_C_sf"/>
</dbReference>
<dbReference type="InterPro" id="IPR029017">
    <property type="entry name" value="Enolase-like_N"/>
</dbReference>
<dbReference type="InterPro" id="IPR020810">
    <property type="entry name" value="Enolase_C"/>
</dbReference>
<dbReference type="InterPro" id="IPR020809">
    <property type="entry name" value="Enolase_CS"/>
</dbReference>
<dbReference type="InterPro" id="IPR020811">
    <property type="entry name" value="Enolase_N"/>
</dbReference>
<dbReference type="NCBIfam" id="TIGR01060">
    <property type="entry name" value="eno"/>
    <property type="match status" value="1"/>
</dbReference>
<dbReference type="PANTHER" id="PTHR11902">
    <property type="entry name" value="ENOLASE"/>
    <property type="match status" value="1"/>
</dbReference>
<dbReference type="PANTHER" id="PTHR11902:SF1">
    <property type="entry name" value="ENOLASE"/>
    <property type="match status" value="1"/>
</dbReference>
<dbReference type="Pfam" id="PF00113">
    <property type="entry name" value="Enolase_C"/>
    <property type="match status" value="1"/>
</dbReference>
<dbReference type="Pfam" id="PF03952">
    <property type="entry name" value="Enolase_N"/>
    <property type="match status" value="1"/>
</dbReference>
<dbReference type="PIRSF" id="PIRSF001400">
    <property type="entry name" value="Enolase"/>
    <property type="match status" value="1"/>
</dbReference>
<dbReference type="PRINTS" id="PR00148">
    <property type="entry name" value="ENOLASE"/>
</dbReference>
<dbReference type="SFLD" id="SFLDS00001">
    <property type="entry name" value="Enolase"/>
    <property type="match status" value="1"/>
</dbReference>
<dbReference type="SFLD" id="SFLDF00002">
    <property type="entry name" value="enolase"/>
    <property type="match status" value="1"/>
</dbReference>
<dbReference type="SMART" id="SM01192">
    <property type="entry name" value="Enolase_C"/>
    <property type="match status" value="1"/>
</dbReference>
<dbReference type="SMART" id="SM01193">
    <property type="entry name" value="Enolase_N"/>
    <property type="match status" value="1"/>
</dbReference>
<dbReference type="SUPFAM" id="SSF51604">
    <property type="entry name" value="Enolase C-terminal domain-like"/>
    <property type="match status" value="1"/>
</dbReference>
<dbReference type="SUPFAM" id="SSF54826">
    <property type="entry name" value="Enolase N-terminal domain-like"/>
    <property type="match status" value="1"/>
</dbReference>
<dbReference type="PROSITE" id="PS00164">
    <property type="entry name" value="ENOLASE"/>
    <property type="match status" value="1"/>
</dbReference>
<protein>
    <recommendedName>
        <fullName evidence="1">Enolase</fullName>
        <ecNumber evidence="1">4.2.1.11</ecNumber>
    </recommendedName>
    <alternativeName>
        <fullName evidence="1">2-phospho-D-glycerate hydro-lyase</fullName>
    </alternativeName>
    <alternativeName>
        <fullName evidence="1">2-phosphoglycerate dehydratase</fullName>
    </alternativeName>
</protein>
<reference key="1">
    <citation type="journal article" date="2007" name="PLoS ONE">
        <title>Genome sequencing shows that European isolates of Francisella tularensis subspecies tularensis are almost identical to US laboratory strain Schu S4.</title>
        <authorList>
            <person name="Chaudhuri R.R."/>
            <person name="Ren C.-P."/>
            <person name="Desmond L."/>
            <person name="Vincent G.A."/>
            <person name="Silman N.J."/>
            <person name="Brehm J.K."/>
            <person name="Elmore M.J."/>
            <person name="Hudson M.J."/>
            <person name="Forsman M."/>
            <person name="Isherwood K.E."/>
            <person name="Gurycova D."/>
            <person name="Minton N.P."/>
            <person name="Titball R.W."/>
            <person name="Pallen M.J."/>
            <person name="Vipond R."/>
        </authorList>
    </citation>
    <scope>NUCLEOTIDE SEQUENCE [LARGE SCALE GENOMIC DNA]</scope>
    <source>
        <strain>FSC 198</strain>
    </source>
</reference>
<comment type="function">
    <text evidence="1">Catalyzes the reversible conversion of 2-phosphoglycerate (2-PG) into phosphoenolpyruvate (PEP). It is essential for the degradation of carbohydrates via glycolysis.</text>
</comment>
<comment type="catalytic activity">
    <reaction evidence="1">
        <text>(2R)-2-phosphoglycerate = phosphoenolpyruvate + H2O</text>
        <dbReference type="Rhea" id="RHEA:10164"/>
        <dbReference type="ChEBI" id="CHEBI:15377"/>
        <dbReference type="ChEBI" id="CHEBI:58289"/>
        <dbReference type="ChEBI" id="CHEBI:58702"/>
        <dbReference type="EC" id="4.2.1.11"/>
    </reaction>
</comment>
<comment type="cofactor">
    <cofactor evidence="1">
        <name>Mg(2+)</name>
        <dbReference type="ChEBI" id="CHEBI:18420"/>
    </cofactor>
    <text evidence="1">Binds a second Mg(2+) ion via substrate during catalysis.</text>
</comment>
<comment type="pathway">
    <text evidence="1">Carbohydrate degradation; glycolysis; pyruvate from D-glyceraldehyde 3-phosphate: step 4/5.</text>
</comment>
<comment type="subunit">
    <text evidence="1">Component of the RNA degradosome, a multiprotein complex involved in RNA processing and mRNA degradation.</text>
</comment>
<comment type="subcellular location">
    <subcellularLocation>
        <location evidence="1">Cytoplasm</location>
    </subcellularLocation>
    <subcellularLocation>
        <location evidence="1">Secreted</location>
    </subcellularLocation>
    <subcellularLocation>
        <location evidence="1">Cell surface</location>
    </subcellularLocation>
    <text evidence="1">Fractions of enolase are present in both the cytoplasm and on the cell surface.</text>
</comment>
<comment type="similarity">
    <text evidence="1">Belongs to the enolase family.</text>
</comment>
<name>ENO_FRAT1</name>
<keyword id="KW-0963">Cytoplasm</keyword>
<keyword id="KW-0324">Glycolysis</keyword>
<keyword id="KW-0456">Lyase</keyword>
<keyword id="KW-0460">Magnesium</keyword>
<keyword id="KW-0479">Metal-binding</keyword>
<keyword id="KW-0964">Secreted</keyword>
<evidence type="ECO:0000255" key="1">
    <source>
        <dbReference type="HAMAP-Rule" id="MF_00318"/>
    </source>
</evidence>
<feature type="chain" id="PRO_0000267037" description="Enolase">
    <location>
        <begin position="1"/>
        <end position="456"/>
    </location>
</feature>
<feature type="active site" description="Proton donor" evidence="1">
    <location>
        <position position="207"/>
    </location>
</feature>
<feature type="active site" description="Proton acceptor" evidence="1">
    <location>
        <position position="339"/>
    </location>
</feature>
<feature type="binding site" evidence="1">
    <location>
        <position position="164"/>
    </location>
    <ligand>
        <name>(2R)-2-phosphoglycerate</name>
        <dbReference type="ChEBI" id="CHEBI:58289"/>
    </ligand>
</feature>
<feature type="binding site" evidence="1">
    <location>
        <position position="244"/>
    </location>
    <ligand>
        <name>Mg(2+)</name>
        <dbReference type="ChEBI" id="CHEBI:18420"/>
    </ligand>
</feature>
<feature type="binding site" evidence="1">
    <location>
        <position position="287"/>
    </location>
    <ligand>
        <name>Mg(2+)</name>
        <dbReference type="ChEBI" id="CHEBI:18420"/>
    </ligand>
</feature>
<feature type="binding site" evidence="1">
    <location>
        <position position="314"/>
    </location>
    <ligand>
        <name>Mg(2+)</name>
        <dbReference type="ChEBI" id="CHEBI:18420"/>
    </ligand>
</feature>
<feature type="binding site" evidence="1">
    <location>
        <position position="339"/>
    </location>
    <ligand>
        <name>(2R)-2-phosphoglycerate</name>
        <dbReference type="ChEBI" id="CHEBI:58289"/>
    </ligand>
</feature>
<feature type="binding site" evidence="1">
    <location>
        <position position="368"/>
    </location>
    <ligand>
        <name>(2R)-2-phosphoglycerate</name>
        <dbReference type="ChEBI" id="CHEBI:58289"/>
    </ligand>
</feature>
<feature type="binding site" evidence="1">
    <location>
        <position position="369"/>
    </location>
    <ligand>
        <name>(2R)-2-phosphoglycerate</name>
        <dbReference type="ChEBI" id="CHEBI:58289"/>
    </ligand>
</feature>
<feature type="binding site" evidence="1">
    <location>
        <position position="390"/>
    </location>
    <ligand>
        <name>(2R)-2-phosphoglycerate</name>
        <dbReference type="ChEBI" id="CHEBI:58289"/>
    </ligand>
</feature>
<gene>
    <name evidence="1" type="primary">eno</name>
    <name type="ordered locus">FTF0709</name>
</gene>
<accession>Q14IC0</accession>